<protein>
    <recommendedName>
        <fullName evidence="1">GTPase Obg</fullName>
        <ecNumber evidence="1">3.6.5.-</ecNumber>
    </recommendedName>
    <alternativeName>
        <fullName evidence="1">GTP-binding protein Obg</fullName>
    </alternativeName>
</protein>
<feature type="chain" id="PRO_0000385843" description="GTPase Obg">
    <location>
        <begin position="1"/>
        <end position="424"/>
    </location>
</feature>
<feature type="domain" description="Obg" evidence="3">
    <location>
        <begin position="1"/>
        <end position="158"/>
    </location>
</feature>
<feature type="domain" description="OBG-type G" evidence="1">
    <location>
        <begin position="159"/>
        <end position="331"/>
    </location>
</feature>
<feature type="domain" description="OCT" evidence="2">
    <location>
        <begin position="345"/>
        <end position="424"/>
    </location>
</feature>
<feature type="binding site" evidence="1">
    <location>
        <begin position="165"/>
        <end position="172"/>
    </location>
    <ligand>
        <name>GTP</name>
        <dbReference type="ChEBI" id="CHEBI:37565"/>
    </ligand>
</feature>
<feature type="binding site" evidence="1">
    <location>
        <position position="172"/>
    </location>
    <ligand>
        <name>Mg(2+)</name>
        <dbReference type="ChEBI" id="CHEBI:18420"/>
    </ligand>
</feature>
<feature type="binding site" evidence="1">
    <location>
        <begin position="190"/>
        <end position="194"/>
    </location>
    <ligand>
        <name>GTP</name>
        <dbReference type="ChEBI" id="CHEBI:37565"/>
    </ligand>
</feature>
<feature type="binding site" evidence="1">
    <location>
        <position position="192"/>
    </location>
    <ligand>
        <name>Mg(2+)</name>
        <dbReference type="ChEBI" id="CHEBI:18420"/>
    </ligand>
</feature>
<feature type="binding site" evidence="1">
    <location>
        <begin position="212"/>
        <end position="215"/>
    </location>
    <ligand>
        <name>GTP</name>
        <dbReference type="ChEBI" id="CHEBI:37565"/>
    </ligand>
</feature>
<feature type="binding site" evidence="1">
    <location>
        <begin position="282"/>
        <end position="285"/>
    </location>
    <ligand>
        <name>GTP</name>
        <dbReference type="ChEBI" id="CHEBI:37565"/>
    </ligand>
</feature>
<feature type="binding site" evidence="1">
    <location>
        <begin position="312"/>
        <end position="314"/>
    </location>
    <ligand>
        <name>GTP</name>
        <dbReference type="ChEBI" id="CHEBI:37565"/>
    </ligand>
</feature>
<reference key="1">
    <citation type="submission" date="2007-06" db="EMBL/GenBank/DDBJ databases">
        <authorList>
            <person name="Brinkac L.M."/>
            <person name="Daugherty S."/>
            <person name="Dodson R.J."/>
            <person name="Madupu R."/>
            <person name="Brown J.L."/>
            <person name="Bruce D."/>
            <person name="Detter C."/>
            <person name="Munk C."/>
            <person name="Smith L.A."/>
            <person name="Smith T.J."/>
            <person name="White O."/>
            <person name="Brettin T.S."/>
        </authorList>
    </citation>
    <scope>NUCLEOTIDE SEQUENCE [LARGE SCALE GENOMIC DNA]</scope>
    <source>
        <strain>Langeland / NCTC 10281 / Type F</strain>
    </source>
</reference>
<evidence type="ECO:0000255" key="1">
    <source>
        <dbReference type="HAMAP-Rule" id="MF_01454"/>
    </source>
</evidence>
<evidence type="ECO:0000255" key="2">
    <source>
        <dbReference type="PROSITE-ProRule" id="PRU01229"/>
    </source>
</evidence>
<evidence type="ECO:0000255" key="3">
    <source>
        <dbReference type="PROSITE-ProRule" id="PRU01231"/>
    </source>
</evidence>
<name>OBG_CLOBL</name>
<accession>A7GHK2</accession>
<keyword id="KW-0963">Cytoplasm</keyword>
<keyword id="KW-0342">GTP-binding</keyword>
<keyword id="KW-0378">Hydrolase</keyword>
<keyword id="KW-0460">Magnesium</keyword>
<keyword id="KW-0479">Metal-binding</keyword>
<keyword id="KW-0547">Nucleotide-binding</keyword>
<proteinExistence type="inferred from homology"/>
<organism>
    <name type="scientific">Clostridium botulinum (strain Langeland / NCTC 10281 / Type F)</name>
    <dbReference type="NCBI Taxonomy" id="441772"/>
    <lineage>
        <taxon>Bacteria</taxon>
        <taxon>Bacillati</taxon>
        <taxon>Bacillota</taxon>
        <taxon>Clostridia</taxon>
        <taxon>Eubacteriales</taxon>
        <taxon>Clostridiaceae</taxon>
        <taxon>Clostridium</taxon>
    </lineage>
</organism>
<dbReference type="EC" id="3.6.5.-" evidence="1"/>
<dbReference type="EMBL" id="CP000728">
    <property type="protein sequence ID" value="ABS42860.1"/>
    <property type="molecule type" value="Genomic_DNA"/>
</dbReference>
<dbReference type="RefSeq" id="WP_003357748.1">
    <property type="nucleotide sequence ID" value="NC_009699.1"/>
</dbReference>
<dbReference type="SMR" id="A7GHK2"/>
<dbReference type="KEGG" id="cbf:CLI_3040"/>
<dbReference type="HOGENOM" id="CLU_011747_2_1_9"/>
<dbReference type="Proteomes" id="UP000002410">
    <property type="component" value="Chromosome"/>
</dbReference>
<dbReference type="GO" id="GO:0005737">
    <property type="term" value="C:cytoplasm"/>
    <property type="evidence" value="ECO:0007669"/>
    <property type="project" value="UniProtKB-SubCell"/>
</dbReference>
<dbReference type="GO" id="GO:0005525">
    <property type="term" value="F:GTP binding"/>
    <property type="evidence" value="ECO:0007669"/>
    <property type="project" value="UniProtKB-UniRule"/>
</dbReference>
<dbReference type="GO" id="GO:0003924">
    <property type="term" value="F:GTPase activity"/>
    <property type="evidence" value="ECO:0007669"/>
    <property type="project" value="UniProtKB-UniRule"/>
</dbReference>
<dbReference type="GO" id="GO:0000287">
    <property type="term" value="F:magnesium ion binding"/>
    <property type="evidence" value="ECO:0007669"/>
    <property type="project" value="InterPro"/>
</dbReference>
<dbReference type="GO" id="GO:0042254">
    <property type="term" value="P:ribosome biogenesis"/>
    <property type="evidence" value="ECO:0007669"/>
    <property type="project" value="UniProtKB-UniRule"/>
</dbReference>
<dbReference type="CDD" id="cd01898">
    <property type="entry name" value="Obg"/>
    <property type="match status" value="1"/>
</dbReference>
<dbReference type="FunFam" id="2.70.210.12:FF:000001">
    <property type="entry name" value="GTPase Obg"/>
    <property type="match status" value="1"/>
</dbReference>
<dbReference type="Gene3D" id="3.30.300.350">
    <property type="entry name" value="GTP-binding protein OBG, C-terminal domain"/>
    <property type="match status" value="1"/>
</dbReference>
<dbReference type="Gene3D" id="2.70.210.12">
    <property type="entry name" value="GTP1/OBG domain"/>
    <property type="match status" value="1"/>
</dbReference>
<dbReference type="Gene3D" id="3.40.50.300">
    <property type="entry name" value="P-loop containing nucleotide triphosphate hydrolases"/>
    <property type="match status" value="1"/>
</dbReference>
<dbReference type="HAMAP" id="MF_01454">
    <property type="entry name" value="GTPase_Obg"/>
    <property type="match status" value="1"/>
</dbReference>
<dbReference type="InterPro" id="IPR031167">
    <property type="entry name" value="G_OBG"/>
</dbReference>
<dbReference type="InterPro" id="IPR006073">
    <property type="entry name" value="GTP-bd"/>
</dbReference>
<dbReference type="InterPro" id="IPR014100">
    <property type="entry name" value="GTP-bd_Obg/CgtA"/>
</dbReference>
<dbReference type="InterPro" id="IPR036346">
    <property type="entry name" value="GTP-bd_prot_GTP1/OBG_C_sf"/>
</dbReference>
<dbReference type="InterPro" id="IPR006074">
    <property type="entry name" value="GTP1-OBG_CS"/>
</dbReference>
<dbReference type="InterPro" id="IPR006169">
    <property type="entry name" value="GTP1_OBG_dom"/>
</dbReference>
<dbReference type="InterPro" id="IPR036726">
    <property type="entry name" value="GTP1_OBG_dom_sf"/>
</dbReference>
<dbReference type="InterPro" id="IPR045086">
    <property type="entry name" value="OBG_GTPase"/>
</dbReference>
<dbReference type="InterPro" id="IPR015349">
    <property type="entry name" value="OCT_dom"/>
</dbReference>
<dbReference type="InterPro" id="IPR027417">
    <property type="entry name" value="P-loop_NTPase"/>
</dbReference>
<dbReference type="InterPro" id="IPR005225">
    <property type="entry name" value="Small_GTP-bd"/>
</dbReference>
<dbReference type="NCBIfam" id="TIGR02729">
    <property type="entry name" value="Obg_CgtA"/>
    <property type="match status" value="1"/>
</dbReference>
<dbReference type="NCBIfam" id="TIGR03595">
    <property type="entry name" value="Obg_CgtA_exten"/>
    <property type="match status" value="1"/>
</dbReference>
<dbReference type="NCBIfam" id="NF008954">
    <property type="entry name" value="PRK12296.1"/>
    <property type="match status" value="1"/>
</dbReference>
<dbReference type="NCBIfam" id="NF008955">
    <property type="entry name" value="PRK12297.1"/>
    <property type="match status" value="1"/>
</dbReference>
<dbReference type="NCBIfam" id="NF008956">
    <property type="entry name" value="PRK12299.1"/>
    <property type="match status" value="1"/>
</dbReference>
<dbReference type="NCBIfam" id="TIGR00231">
    <property type="entry name" value="small_GTP"/>
    <property type="match status" value="1"/>
</dbReference>
<dbReference type="PANTHER" id="PTHR11702">
    <property type="entry name" value="DEVELOPMENTALLY REGULATED GTP-BINDING PROTEIN-RELATED"/>
    <property type="match status" value="1"/>
</dbReference>
<dbReference type="PANTHER" id="PTHR11702:SF31">
    <property type="entry name" value="MITOCHONDRIAL RIBOSOME-ASSOCIATED GTPASE 2"/>
    <property type="match status" value="1"/>
</dbReference>
<dbReference type="Pfam" id="PF09269">
    <property type="entry name" value="DUF1967"/>
    <property type="match status" value="1"/>
</dbReference>
<dbReference type="Pfam" id="PF01018">
    <property type="entry name" value="GTP1_OBG"/>
    <property type="match status" value="1"/>
</dbReference>
<dbReference type="Pfam" id="PF01926">
    <property type="entry name" value="MMR_HSR1"/>
    <property type="match status" value="1"/>
</dbReference>
<dbReference type="PIRSF" id="PIRSF002401">
    <property type="entry name" value="GTP_bd_Obg/CgtA"/>
    <property type="match status" value="1"/>
</dbReference>
<dbReference type="PRINTS" id="PR00326">
    <property type="entry name" value="GTP1OBG"/>
</dbReference>
<dbReference type="SUPFAM" id="SSF102741">
    <property type="entry name" value="Obg GTP-binding protein C-terminal domain"/>
    <property type="match status" value="1"/>
</dbReference>
<dbReference type="SUPFAM" id="SSF82051">
    <property type="entry name" value="Obg GTP-binding protein N-terminal domain"/>
    <property type="match status" value="1"/>
</dbReference>
<dbReference type="SUPFAM" id="SSF52540">
    <property type="entry name" value="P-loop containing nucleoside triphosphate hydrolases"/>
    <property type="match status" value="1"/>
</dbReference>
<dbReference type="PROSITE" id="PS51710">
    <property type="entry name" value="G_OBG"/>
    <property type="match status" value="1"/>
</dbReference>
<dbReference type="PROSITE" id="PS00905">
    <property type="entry name" value="GTP1_OBG"/>
    <property type="match status" value="1"/>
</dbReference>
<dbReference type="PROSITE" id="PS51883">
    <property type="entry name" value="OBG"/>
    <property type="match status" value="1"/>
</dbReference>
<dbReference type="PROSITE" id="PS51881">
    <property type="entry name" value="OCT"/>
    <property type="match status" value="1"/>
</dbReference>
<gene>
    <name evidence="1" type="primary">obg</name>
    <name type="ordered locus">CLI_3040</name>
</gene>
<comment type="function">
    <text evidence="1">An essential GTPase which binds GTP, GDP and possibly (p)ppGpp with moderate affinity, with high nucleotide exchange rates and a fairly low GTP hydrolysis rate. Plays a role in control of the cell cycle, stress response, ribosome biogenesis and in those bacteria that undergo differentiation, in morphogenesis control.</text>
</comment>
<comment type="cofactor">
    <cofactor evidence="1">
        <name>Mg(2+)</name>
        <dbReference type="ChEBI" id="CHEBI:18420"/>
    </cofactor>
</comment>
<comment type="subunit">
    <text evidence="1">Monomer.</text>
</comment>
<comment type="subcellular location">
    <subcellularLocation>
        <location evidence="1">Cytoplasm</location>
    </subcellularLocation>
</comment>
<comment type="similarity">
    <text evidence="1">Belongs to the TRAFAC class OBG-HflX-like GTPase superfamily. OBG GTPase family.</text>
</comment>
<sequence>MFIDTAKIFVKSGKGGDGSISFRREKYIAFGGPDGGDGGKGGNVVLVVDPNMTTLLDFTYKRKYKAEPGGNGAGSKCFGKNGKDLHIKVPMGTIVKDAETDKIMADLSKPEDSYVVAKGGRGGKGNCRFTTPTRQAPDFAEPGMPEEERWIKLELKLLADVGLIGFPNVGKSTLLSVVSKARPKIANYHFTTLKPNLGVVSIEGVNNFVIADIPGIIEGASEGVGLGLDFLRHVERTRVLIHVIDISSVEGRDPYDDFLKINDELKRYSVKLYDRPQIIAANKSDMLFDEEKFEEFKTKVEKHGYNKVFKISAATKQGVDDLMKEAARLLSTIPVTDLEISEEDRFIEEEKRFTYSIRKEDNTYIVEGSFVDRLLNAVNVNDPDDLRYFHKVLKNKGVMEELMEMGIEDGDVVRLNDFEFDFLL</sequence>